<sequence>MIQKRKRTVSFRLVLMCTLLFVSLPITKTSAVNGTLMQYFEWYTPNDGQHWKRLQNDAEHLSDIGITAVWIPPAYKGLSQSDNGYGPYDLYDLGEFQQKGTVRTKYGTKSELQDAIGSLHSRNVQVYGDVVLNHKAGADATEDVTAVEVNPANRNQETSEEYQIKAWTDFRFPGRGNTYSDFKWHWYHFDGADWDESRKISRIFKFRGEGKAWDWEVSSENGNYDYLMYADVDYDHPDVVAETKKWGIWYANELSLDGFRIDAAKHIKFSFLRDWVQAVRQATGKEMFTVAEYWQNNAGKLENYLNKTSFNQSVFDVPLHFNLQAASSQGGGYDMRRLLDGTVVSRHPEKAVTFVENHDTQPGQSLESTVQTWFKPLAYAFILTRESGYPQVFYGDMYGTKGTSPKEIPSLKDNIEPILKARKEYAYGPQHDYIDHPDVIGWTREGDSSAAKSGLAALITDGPGGSKRMYAGLKNAGETWYDITGNRSDTVKIGSDGWGEFHVNDGSVSIYVQK</sequence>
<comment type="catalytic activity">
    <reaction evidence="2">
        <text>Endohydrolysis of (1-&gt;4)-alpha-D-glucosidic linkages in polysaccharides containing three or more (1-&gt;4)-alpha-linked D-glucose units.</text>
        <dbReference type="EC" id="3.2.1.1"/>
    </reaction>
</comment>
<comment type="cofactor">
    <cofactor evidence="3 4">
        <name>Ca(2+)</name>
        <dbReference type="ChEBI" id="CHEBI:29108"/>
    </cofactor>
    <text evidence="3 4">Binds 3 Ca(2+) ions per subunit.</text>
</comment>
<comment type="cofactor">
    <cofactor evidence="3">
        <name>Na(+)</name>
        <dbReference type="ChEBI" id="CHEBI:29101"/>
    </cofactor>
    <text evidence="3">Binds 1 sodium ion per subunit.</text>
</comment>
<comment type="subunit">
    <text>Monomer.</text>
</comment>
<comment type="subcellular location">
    <subcellularLocation>
        <location evidence="5">Secreted</location>
    </subcellularLocation>
</comment>
<comment type="similarity">
    <text evidence="7">Belongs to the glycosyl hydrolase 13 family.</text>
</comment>
<organism>
    <name type="scientific">Bacillus amyloliquefaciens</name>
    <name type="common">Bacillus velezensis</name>
    <dbReference type="NCBI Taxonomy" id="1390"/>
    <lineage>
        <taxon>Bacteria</taxon>
        <taxon>Bacillati</taxon>
        <taxon>Bacillota</taxon>
        <taxon>Bacilli</taxon>
        <taxon>Bacillales</taxon>
        <taxon>Bacillaceae</taxon>
        <taxon>Bacillus</taxon>
        <taxon>Bacillus amyloliquefaciens group</taxon>
    </lineage>
</organism>
<reference key="1">
    <citation type="journal article" date="1983" name="J. Biol. Chem.">
        <title>Amino acid sequence of alpha-amylase from Bacillus amyloliquefaciens deduced from the nucleotide sequence of the cloned gene.</title>
        <authorList>
            <person name="Takkinen K."/>
            <person name="Pettersson R.F."/>
            <person name="Kalkkinen N."/>
            <person name="Palva I."/>
            <person name="Soederlund H."/>
            <person name="Kaeaeriaeinen L."/>
        </authorList>
    </citation>
    <scope>NUCLEOTIDE SEQUENCE [GENOMIC DNA]</scope>
    <source>
        <strain>IH</strain>
    </source>
</reference>
<reference key="2">
    <citation type="journal article" date="1981" name="Gene">
        <title>Nucleotide sequence of the promoter and NH2-terminal signal peptide region of the alpha-amylase gene from Bacillus amyloliquefaciens.</title>
        <authorList>
            <person name="Palva I."/>
            <person name="Pettersson R.F."/>
            <person name="Kalkkinen N."/>
            <person name="Lehtovaara P."/>
            <person name="Sarvas M."/>
            <person name="Soederlund H."/>
            <person name="Takkinen K."/>
            <person name="Kaeaeriaeinen L."/>
        </authorList>
    </citation>
    <scope>NUCLEOTIDE SEQUENCE [GENOMIC DNA] OF 1-96</scope>
</reference>
<reference key="3">
    <citation type="journal article" date="1987" name="Gene">
        <title>Efficient secretion of Bacillus amyloliquefaciens alpha-amylase by its own signal peptide from Saccharomyces cerevisiae host cells.</title>
        <authorList>
            <person name="Ruohonen L."/>
            <person name="Hackman P."/>
            <person name="Lehtovaara P."/>
            <person name="Knowles J.K.C."/>
            <person name="Karaenen S."/>
        </authorList>
    </citation>
    <scope>NUCLEOTIDE SEQUENCE [GENOMIC DNA] OF 1-39</scope>
    <scope>SUBCELLULAR LOCATION</scope>
</reference>
<reference key="4">
    <citation type="journal article" date="1980" name="Biochem. J.">
        <title>Sequence of the N-terminal half of Bacillus amyloliquefaciens alpha-amylase.</title>
        <authorList>
            <person name="Chung H.S."/>
            <person name="Friedberg F."/>
        </authorList>
    </citation>
    <scope>PROTEIN SEQUENCE OF 32-222</scope>
</reference>
<reference key="5">
    <citation type="journal article" date="2000" name="Biochemistry">
        <title>Structural analysis of a chimeric bacterial alpha-amylase. High-resolution analysis of native and ligand complexes.</title>
        <authorList>
            <person name="Brzozowski A.M."/>
            <person name="Lawson D.M."/>
            <person name="Turkenburg J.P."/>
            <person name="Bisgaard-Frantzen H."/>
            <person name="Svendsen A."/>
            <person name="Borchert T.V."/>
            <person name="Dauter Z."/>
            <person name="Wilson K.S."/>
            <person name="Davies G.J."/>
        </authorList>
    </citation>
    <scope>X-RAY CRYSTALLOGRAPHY (1.70 ANGSTROMS) OF 32-331 IN COMPLEX WITH CARBOHYDRATE; SODIUM AND CALCIUM</scope>
    <scope>COFACTOR</scope>
</reference>
<reference evidence="9" key="6">
    <citation type="journal article" date="2010" name="Acta Crystallogr. F">
        <title>Structure of Bacillus amyloliquefaciens alpha-amylase at high resolution: implications for thermal stability.</title>
        <authorList>
            <person name="Alikhajeh J."/>
            <person name="Khajeh K."/>
            <person name="Ranjbar B."/>
            <person name="Naderi-Manesh H."/>
            <person name="Lin Y.H."/>
            <person name="Liu E."/>
            <person name="Guan H.H."/>
            <person name="Hsieh Y.C."/>
            <person name="Chuankhayan P."/>
            <person name="Huang Y.C."/>
            <person name="Jeyaraman J."/>
            <person name="Liu M.Y."/>
            <person name="Chen C.J."/>
        </authorList>
    </citation>
    <scope>X-RAY CRYSTALLOGRAPHY (1.40 ANGSTROMS) OF 32-514 IN COMPLEX WITH CALCIUM</scope>
    <scope>COFACTOR</scope>
</reference>
<feature type="signal peptide" evidence="6">
    <location>
        <begin position="1"/>
        <end position="31"/>
    </location>
</feature>
<feature type="chain" id="PRO_0000001330" description="Alpha-amylase">
    <location>
        <begin position="32"/>
        <end position="514"/>
    </location>
</feature>
<feature type="active site" description="Nucleophile">
    <location>
        <position position="262"/>
    </location>
</feature>
<feature type="active site" description="Proton donor">
    <location>
        <position position="292"/>
    </location>
</feature>
<feature type="binding site" evidence="3 4 8">
    <location>
        <position position="133"/>
    </location>
    <ligand>
        <name>Ca(2+)</name>
        <dbReference type="ChEBI" id="CHEBI:29108"/>
        <label>1</label>
    </ligand>
</feature>
<feature type="binding site" evidence="3 4 8">
    <location>
        <position position="190"/>
    </location>
    <ligand>
        <name>Ca(2+)</name>
        <dbReference type="ChEBI" id="CHEBI:29108"/>
        <label>2</label>
    </ligand>
</feature>
<feature type="binding site" evidence="3 8">
    <location>
        <position position="190"/>
    </location>
    <ligand>
        <name>Na(+)</name>
        <dbReference type="ChEBI" id="CHEBI:29101"/>
    </ligand>
</feature>
<feature type="binding site" evidence="3 4 8">
    <location>
        <position position="212"/>
    </location>
    <ligand>
        <name>Ca(2+)</name>
        <dbReference type="ChEBI" id="CHEBI:29108"/>
        <label>2</label>
    </ligand>
</feature>
<feature type="binding site" evidence="3 4 8">
    <location>
        <position position="214"/>
    </location>
    <ligand>
        <name>Ca(2+)</name>
        <dbReference type="ChEBI" id="CHEBI:29108"/>
        <label>2</label>
    </ligand>
</feature>
<feature type="binding site" evidence="3 8">
    <location>
        <position position="214"/>
    </location>
    <ligand>
        <name>Na(+)</name>
        <dbReference type="ChEBI" id="CHEBI:29101"/>
    </ligand>
</feature>
<feature type="binding site" evidence="3 4 8">
    <location>
        <position position="225"/>
    </location>
    <ligand>
        <name>Ca(2+)</name>
        <dbReference type="ChEBI" id="CHEBI:29108"/>
        <label>1</label>
    </ligand>
</feature>
<feature type="binding site" evidence="3 8">
    <location>
        <position position="225"/>
    </location>
    <ligand>
        <name>Na(+)</name>
        <dbReference type="ChEBI" id="CHEBI:29101"/>
    </ligand>
</feature>
<feature type="binding site" evidence="3 4 8">
    <location>
        <position position="231"/>
    </location>
    <ligand>
        <name>Ca(2+)</name>
        <dbReference type="ChEBI" id="CHEBI:29108"/>
        <label>1</label>
    </ligand>
</feature>
<feature type="binding site" evidence="3 8">
    <location>
        <position position="231"/>
    </location>
    <ligand>
        <name>Na(+)</name>
        <dbReference type="ChEBI" id="CHEBI:29101"/>
    </ligand>
</feature>
<feature type="binding site" evidence="3 4 8">
    <location>
        <position position="233"/>
    </location>
    <ligand>
        <name>Ca(2+)</name>
        <dbReference type="ChEBI" id="CHEBI:29108"/>
        <label>2</label>
    </ligand>
</feature>
<feature type="binding site" evidence="3 4 8">
    <location>
        <position position="235"/>
    </location>
    <ligand>
        <name>Ca(2+)</name>
        <dbReference type="ChEBI" id="CHEBI:29108"/>
        <label>2</label>
    </ligand>
</feature>
<feature type="binding site" evidence="3 4 8">
    <location>
        <position position="266"/>
    </location>
    <ligand>
        <name>Ca(2+)</name>
        <dbReference type="ChEBI" id="CHEBI:29108"/>
        <label>1</label>
    </ligand>
</feature>
<feature type="binding site" evidence="4 9">
    <location>
        <position position="331"/>
    </location>
    <ligand>
        <name>Ca(2+)</name>
        <dbReference type="ChEBI" id="CHEBI:29108"/>
        <label>3</label>
    </ligand>
</feature>
<feature type="binding site" evidence="4 9">
    <location>
        <position position="438"/>
    </location>
    <ligand>
        <name>Ca(2+)</name>
        <dbReference type="ChEBI" id="CHEBI:29108"/>
        <label>3</label>
    </ligand>
</feature>
<feature type="binding site" evidence="4 9">
    <location>
        <position position="461"/>
    </location>
    <ligand>
        <name>Ca(2+)</name>
        <dbReference type="ChEBI" id="CHEBI:29108"/>
        <label>3</label>
    </ligand>
</feature>
<feature type="site" description="Transition state stabilizer" evidence="1">
    <location>
        <position position="359"/>
    </location>
</feature>
<feature type="sequence conflict" description="In Ref. 4; AA sequence." evidence="7" ref="4">
    <original>L</original>
    <variation>I</variation>
    <location>
        <position position="54"/>
    </location>
</feature>
<feature type="sequence conflict" description="In Ref. 4; AA sequence." evidence="7" ref="4">
    <original>I</original>
    <variation>L</variation>
    <location>
        <position position="64"/>
    </location>
</feature>
<feature type="sequence conflict" description="In Ref. 4; AA sequence." evidence="7" ref="4">
    <original>S</original>
    <variation>D</variation>
    <location>
        <position position="79"/>
    </location>
</feature>
<feature type="sequence conflict" description="In Ref. 4; AA sequence." evidence="7" ref="4">
    <original>G</original>
    <variation>S</variation>
    <location>
        <position position="84"/>
    </location>
</feature>
<feature type="strand" evidence="12">
    <location>
        <begin position="36"/>
        <end position="38"/>
    </location>
</feature>
<feature type="strand" evidence="12">
    <location>
        <begin position="46"/>
        <end position="48"/>
    </location>
</feature>
<feature type="helix" evidence="12">
    <location>
        <begin position="50"/>
        <end position="64"/>
    </location>
</feature>
<feature type="strand" evidence="12">
    <location>
        <begin position="68"/>
        <end position="71"/>
    </location>
</feature>
<feature type="strand" evidence="12">
    <location>
        <begin position="75"/>
        <end position="79"/>
    </location>
</feature>
<feature type="strand" evidence="12">
    <location>
        <begin position="84"/>
        <end position="89"/>
    </location>
</feature>
<feature type="strand" evidence="11">
    <location>
        <begin position="101"/>
        <end position="103"/>
    </location>
</feature>
<feature type="helix" evidence="12">
    <location>
        <begin position="109"/>
        <end position="121"/>
    </location>
</feature>
<feature type="strand" evidence="12">
    <location>
        <begin position="125"/>
        <end position="130"/>
    </location>
</feature>
<feature type="strand" evidence="12">
    <location>
        <begin position="133"/>
        <end position="135"/>
    </location>
</feature>
<feature type="strand" evidence="12">
    <location>
        <begin position="139"/>
        <end position="150"/>
    </location>
</feature>
<feature type="strand" evidence="12">
    <location>
        <begin position="153"/>
        <end position="157"/>
    </location>
</feature>
<feature type="strand" evidence="12">
    <location>
        <begin position="162"/>
        <end position="170"/>
    </location>
</feature>
<feature type="turn" evidence="12">
    <location>
        <begin position="173"/>
        <end position="177"/>
    </location>
</feature>
<feature type="helix" evidence="12">
    <location>
        <begin position="186"/>
        <end position="188"/>
    </location>
</feature>
<feature type="strand" evidence="12">
    <location>
        <begin position="189"/>
        <end position="195"/>
    </location>
</feature>
<feature type="turn" evidence="12">
    <location>
        <begin position="196"/>
        <end position="199"/>
    </location>
</feature>
<feature type="strand" evidence="12">
    <location>
        <begin position="200"/>
        <end position="206"/>
    </location>
</feature>
<feature type="strand" evidence="11">
    <location>
        <begin position="208"/>
        <end position="210"/>
    </location>
</feature>
<feature type="strand" evidence="12">
    <location>
        <begin position="215"/>
        <end position="217"/>
    </location>
</feature>
<feature type="strand" evidence="12">
    <location>
        <begin position="228"/>
        <end position="232"/>
    </location>
</feature>
<feature type="helix" evidence="12">
    <location>
        <begin position="237"/>
        <end position="254"/>
    </location>
</feature>
<feature type="strand" evidence="12">
    <location>
        <begin position="258"/>
        <end position="261"/>
    </location>
</feature>
<feature type="helix" evidence="12">
    <location>
        <begin position="264"/>
        <end position="266"/>
    </location>
</feature>
<feature type="helix" evidence="12">
    <location>
        <begin position="269"/>
        <end position="283"/>
    </location>
</feature>
<feature type="strand" evidence="12">
    <location>
        <begin position="288"/>
        <end position="291"/>
    </location>
</feature>
<feature type="helix" evidence="12">
    <location>
        <begin position="298"/>
        <end position="307"/>
    </location>
</feature>
<feature type="turn" evidence="12">
    <location>
        <begin position="308"/>
        <end position="310"/>
    </location>
</feature>
<feature type="strand" evidence="12">
    <location>
        <begin position="312"/>
        <end position="315"/>
    </location>
</feature>
<feature type="helix" evidence="12">
    <location>
        <begin position="317"/>
        <end position="328"/>
    </location>
</feature>
<feature type="turn" evidence="12">
    <location>
        <begin position="329"/>
        <end position="331"/>
    </location>
</feature>
<feature type="helix" evidence="12">
    <location>
        <begin position="335"/>
        <end position="337"/>
    </location>
</feature>
<feature type="turn" evidence="12">
    <location>
        <begin position="338"/>
        <end position="341"/>
    </location>
</feature>
<feature type="helix" evidence="12">
    <location>
        <begin position="343"/>
        <end position="346"/>
    </location>
</feature>
<feature type="helix" evidence="12">
    <location>
        <begin position="348"/>
        <end position="350"/>
    </location>
</feature>
<feature type="strand" evidence="12">
    <location>
        <begin position="351"/>
        <end position="355"/>
    </location>
</feature>
<feature type="turn" evidence="12">
    <location>
        <begin position="358"/>
        <end position="360"/>
    </location>
</feature>
<feature type="turn" evidence="12">
    <location>
        <begin position="372"/>
        <end position="374"/>
    </location>
</feature>
<feature type="helix" evidence="12">
    <location>
        <begin position="375"/>
        <end position="383"/>
    </location>
</feature>
<feature type="strand" evidence="12">
    <location>
        <begin position="384"/>
        <end position="393"/>
    </location>
</feature>
<feature type="helix" evidence="12">
    <location>
        <begin position="394"/>
        <end position="398"/>
    </location>
</feature>
<feature type="strand" evidence="10">
    <location>
        <begin position="403"/>
        <end position="405"/>
    </location>
</feature>
<feature type="helix" evidence="12">
    <location>
        <begin position="412"/>
        <end position="424"/>
    </location>
</feature>
<feature type="strand" evidence="12">
    <location>
        <begin position="430"/>
        <end position="433"/>
    </location>
</feature>
<feature type="strand" evidence="12">
    <location>
        <begin position="436"/>
        <end position="444"/>
    </location>
</feature>
<feature type="strand" evidence="12">
    <location>
        <begin position="455"/>
        <end position="462"/>
    </location>
</feature>
<feature type="strand" evidence="12">
    <location>
        <begin position="465"/>
        <end position="470"/>
    </location>
</feature>
<feature type="helix" evidence="12">
    <location>
        <begin position="473"/>
        <end position="475"/>
    </location>
</feature>
<feature type="strand" evidence="12">
    <location>
        <begin position="479"/>
        <end position="482"/>
    </location>
</feature>
<feature type="strand" evidence="12">
    <location>
        <begin position="490"/>
        <end position="492"/>
    </location>
</feature>
<feature type="strand" evidence="12">
    <location>
        <begin position="497"/>
        <end position="503"/>
    </location>
</feature>
<feature type="strand" evidence="12">
    <location>
        <begin position="508"/>
        <end position="513"/>
    </location>
</feature>
<keyword id="KW-0002">3D-structure</keyword>
<keyword id="KW-0106">Calcium</keyword>
<keyword id="KW-0119">Carbohydrate metabolism</keyword>
<keyword id="KW-0903">Direct protein sequencing</keyword>
<keyword id="KW-0326">Glycosidase</keyword>
<keyword id="KW-0378">Hydrolase</keyword>
<keyword id="KW-0479">Metal-binding</keyword>
<keyword id="KW-0964">Secreted</keyword>
<keyword id="KW-0732">Signal</keyword>
<proteinExistence type="evidence at protein level"/>
<evidence type="ECO:0000250" key="1"/>
<evidence type="ECO:0000250" key="2">
    <source>
        <dbReference type="UniProtKB" id="P29957"/>
    </source>
</evidence>
<evidence type="ECO:0000269" key="3">
    <source>
    </source>
</evidence>
<evidence type="ECO:0000269" key="4">
    <source>
    </source>
</evidence>
<evidence type="ECO:0000269" key="5">
    <source>
    </source>
</evidence>
<evidence type="ECO:0000269" key="6">
    <source>
    </source>
</evidence>
<evidence type="ECO:0000305" key="7"/>
<evidence type="ECO:0007744" key="8">
    <source>
        <dbReference type="PDB" id="1E40"/>
    </source>
</evidence>
<evidence type="ECO:0007744" key="9">
    <source>
        <dbReference type="PDB" id="3BH4"/>
    </source>
</evidence>
<evidence type="ECO:0007829" key="10">
    <source>
        <dbReference type="PDB" id="1E3X"/>
    </source>
</evidence>
<evidence type="ECO:0007829" key="11">
    <source>
        <dbReference type="PDB" id="1E43"/>
    </source>
</evidence>
<evidence type="ECO:0007829" key="12">
    <source>
        <dbReference type="PDB" id="3BH4"/>
    </source>
</evidence>
<accession>P00692</accession>
<name>AMY_BACAM</name>
<dbReference type="EC" id="3.2.1.1" evidence="2"/>
<dbReference type="EMBL" id="J01542">
    <property type="protein sequence ID" value="AAA22191.1"/>
    <property type="molecule type" value="mRNA"/>
</dbReference>
<dbReference type="EMBL" id="V00092">
    <property type="protein sequence ID" value="CAA23430.1"/>
    <property type="molecule type" value="Genomic_DNA"/>
</dbReference>
<dbReference type="EMBL" id="M18424">
    <property type="protein sequence ID" value="AAA22192.1"/>
    <property type="molecule type" value="Genomic_DNA"/>
</dbReference>
<dbReference type="PIR" id="A92389">
    <property type="entry name" value="ALBSN"/>
</dbReference>
<dbReference type="RefSeq" id="WP_013352208.1">
    <property type="nucleotide sequence ID" value="NZ_CBCRUW010000002.1"/>
</dbReference>
<dbReference type="PDB" id="1E3X">
    <property type="method" value="X-ray"/>
    <property type="resolution" value="1.90 A"/>
    <property type="chains" value="A=32-514"/>
</dbReference>
<dbReference type="PDB" id="1E3Z">
    <property type="method" value="X-ray"/>
    <property type="resolution" value="1.93 A"/>
    <property type="chains" value="A=32-514"/>
</dbReference>
<dbReference type="PDB" id="1E40">
    <property type="method" value="X-ray"/>
    <property type="resolution" value="2.20 A"/>
    <property type="chains" value="A=32-514"/>
</dbReference>
<dbReference type="PDB" id="1E43">
    <property type="method" value="X-ray"/>
    <property type="resolution" value="1.70 A"/>
    <property type="chains" value="A=32-514"/>
</dbReference>
<dbReference type="PDB" id="3BH4">
    <property type="method" value="X-ray"/>
    <property type="resolution" value="1.40 A"/>
    <property type="chains" value="A/B=32-514"/>
</dbReference>
<dbReference type="PDBsum" id="1E3X"/>
<dbReference type="PDBsum" id="1E3Z"/>
<dbReference type="PDBsum" id="1E40"/>
<dbReference type="PDBsum" id="1E43"/>
<dbReference type="PDBsum" id="3BH4"/>
<dbReference type="SMR" id="P00692"/>
<dbReference type="STRING" id="692420.BAMF_1635"/>
<dbReference type="DrugBank" id="DB03773">
    <property type="generic name" value="alpha-D-quinovopyranose"/>
</dbReference>
<dbReference type="DrugBank" id="DB02379">
    <property type="generic name" value="Beta-D-Glucose"/>
</dbReference>
<dbReference type="CAZy" id="GH13">
    <property type="family name" value="Glycoside Hydrolase Family 13"/>
</dbReference>
<dbReference type="OMA" id="MQYFEWN"/>
<dbReference type="BRENDA" id="3.2.1.1">
    <property type="organism ID" value="630"/>
</dbReference>
<dbReference type="EvolutionaryTrace" id="P00692"/>
<dbReference type="GO" id="GO:0005576">
    <property type="term" value="C:extracellular region"/>
    <property type="evidence" value="ECO:0007669"/>
    <property type="project" value="UniProtKB-SubCell"/>
</dbReference>
<dbReference type="GO" id="GO:0004556">
    <property type="term" value="F:alpha-amylase activity"/>
    <property type="evidence" value="ECO:0007669"/>
    <property type="project" value="UniProtKB-EC"/>
</dbReference>
<dbReference type="GO" id="GO:0005509">
    <property type="term" value="F:calcium ion binding"/>
    <property type="evidence" value="ECO:0007669"/>
    <property type="project" value="InterPro"/>
</dbReference>
<dbReference type="GO" id="GO:0005975">
    <property type="term" value="P:carbohydrate metabolic process"/>
    <property type="evidence" value="ECO:0007669"/>
    <property type="project" value="InterPro"/>
</dbReference>
<dbReference type="CDD" id="cd11318">
    <property type="entry name" value="AmyAc_bac_fung_AmyA"/>
    <property type="match status" value="1"/>
</dbReference>
<dbReference type="FunFam" id="2.40.30.140:FF:000002">
    <property type="entry name" value="Alpha-amylase"/>
    <property type="match status" value="1"/>
</dbReference>
<dbReference type="Gene3D" id="2.40.30.140">
    <property type="match status" value="1"/>
</dbReference>
<dbReference type="Gene3D" id="3.20.20.80">
    <property type="entry name" value="Glycosidases"/>
    <property type="match status" value="1"/>
</dbReference>
<dbReference type="Gene3D" id="2.60.40.1180">
    <property type="entry name" value="Golgi alpha-mannosidase II"/>
    <property type="match status" value="1"/>
</dbReference>
<dbReference type="InterPro" id="IPR013776">
    <property type="entry name" value="A-amylase_thermo"/>
</dbReference>
<dbReference type="InterPro" id="IPR015237">
    <property type="entry name" value="Alpha-amylase_C_pro"/>
</dbReference>
<dbReference type="InterPro" id="IPR006047">
    <property type="entry name" value="Glyco_hydro_13_cat_dom"/>
</dbReference>
<dbReference type="InterPro" id="IPR013780">
    <property type="entry name" value="Glyco_hydro_b"/>
</dbReference>
<dbReference type="InterPro" id="IPR017853">
    <property type="entry name" value="Glycoside_hydrolase_SF"/>
</dbReference>
<dbReference type="NCBIfam" id="NF006968">
    <property type="entry name" value="PRK09441.1-1"/>
    <property type="match status" value="1"/>
</dbReference>
<dbReference type="NCBIfam" id="NF006969">
    <property type="entry name" value="PRK09441.1-2"/>
    <property type="match status" value="1"/>
</dbReference>
<dbReference type="NCBIfam" id="NF006972">
    <property type="entry name" value="PRK09441.1-5"/>
    <property type="match status" value="1"/>
</dbReference>
<dbReference type="PANTHER" id="PTHR43447">
    <property type="entry name" value="ALPHA-AMYLASE"/>
    <property type="match status" value="1"/>
</dbReference>
<dbReference type="Pfam" id="PF09154">
    <property type="entry name" value="Alpha-amy_C_pro"/>
    <property type="match status" value="1"/>
</dbReference>
<dbReference type="Pfam" id="PF00128">
    <property type="entry name" value="Alpha-amylase"/>
    <property type="match status" value="1"/>
</dbReference>
<dbReference type="PIRSF" id="PIRSF001021">
    <property type="entry name" value="Alph-amls_thrmst"/>
    <property type="match status" value="1"/>
</dbReference>
<dbReference type="SMART" id="SM00642">
    <property type="entry name" value="Aamy"/>
    <property type="match status" value="1"/>
</dbReference>
<dbReference type="SUPFAM" id="SSF51445">
    <property type="entry name" value="(Trans)glycosidases"/>
    <property type="match status" value="1"/>
</dbReference>
<dbReference type="SUPFAM" id="SSF51011">
    <property type="entry name" value="Glycosyl hydrolase domain"/>
    <property type="match status" value="1"/>
</dbReference>
<protein>
    <recommendedName>
        <fullName>Alpha-amylase</fullName>
        <ecNumber evidence="2">3.2.1.1</ecNumber>
    </recommendedName>
    <alternativeName>
        <fullName>1,4-alpha-D-glucan glucanohydrolase</fullName>
    </alternativeName>
</protein>